<evidence type="ECO:0000255" key="1">
    <source>
        <dbReference type="HAMAP-Rule" id="MF_01366"/>
    </source>
</evidence>
<evidence type="ECO:0000305" key="2"/>
<organism>
    <name type="scientific">Clostridium tetani (strain Massachusetts / E88)</name>
    <dbReference type="NCBI Taxonomy" id="212717"/>
    <lineage>
        <taxon>Bacteria</taxon>
        <taxon>Bacillati</taxon>
        <taxon>Bacillota</taxon>
        <taxon>Clostridia</taxon>
        <taxon>Eubacteriales</taxon>
        <taxon>Clostridiaceae</taxon>
        <taxon>Clostridium</taxon>
    </lineage>
</organism>
<gene>
    <name evidence="1" type="primary">rplM</name>
    <name type="ordered locus">CTC_02572</name>
</gene>
<dbReference type="EMBL" id="AE015927">
    <property type="protein sequence ID" value="AAO37029.1"/>
    <property type="molecule type" value="Genomic_DNA"/>
</dbReference>
<dbReference type="RefSeq" id="WP_011100690.1">
    <property type="nucleotide sequence ID" value="NC_004557.1"/>
</dbReference>
<dbReference type="SMR" id="Q890R6"/>
<dbReference type="STRING" id="212717.CTC_02572"/>
<dbReference type="GeneID" id="24253409"/>
<dbReference type="KEGG" id="ctc:CTC_02572"/>
<dbReference type="HOGENOM" id="CLU_082184_2_2_9"/>
<dbReference type="OrthoDB" id="9801330at2"/>
<dbReference type="Proteomes" id="UP000001412">
    <property type="component" value="Chromosome"/>
</dbReference>
<dbReference type="GO" id="GO:0022625">
    <property type="term" value="C:cytosolic large ribosomal subunit"/>
    <property type="evidence" value="ECO:0007669"/>
    <property type="project" value="TreeGrafter"/>
</dbReference>
<dbReference type="GO" id="GO:0003729">
    <property type="term" value="F:mRNA binding"/>
    <property type="evidence" value="ECO:0007669"/>
    <property type="project" value="TreeGrafter"/>
</dbReference>
<dbReference type="GO" id="GO:0003735">
    <property type="term" value="F:structural constituent of ribosome"/>
    <property type="evidence" value="ECO:0007669"/>
    <property type="project" value="InterPro"/>
</dbReference>
<dbReference type="GO" id="GO:0017148">
    <property type="term" value="P:negative regulation of translation"/>
    <property type="evidence" value="ECO:0007669"/>
    <property type="project" value="TreeGrafter"/>
</dbReference>
<dbReference type="GO" id="GO:0006412">
    <property type="term" value="P:translation"/>
    <property type="evidence" value="ECO:0007669"/>
    <property type="project" value="UniProtKB-UniRule"/>
</dbReference>
<dbReference type="CDD" id="cd00392">
    <property type="entry name" value="Ribosomal_L13"/>
    <property type="match status" value="1"/>
</dbReference>
<dbReference type="FunFam" id="3.90.1180.10:FF:000001">
    <property type="entry name" value="50S ribosomal protein L13"/>
    <property type="match status" value="1"/>
</dbReference>
<dbReference type="Gene3D" id="3.90.1180.10">
    <property type="entry name" value="Ribosomal protein L13"/>
    <property type="match status" value="1"/>
</dbReference>
<dbReference type="HAMAP" id="MF_01366">
    <property type="entry name" value="Ribosomal_uL13"/>
    <property type="match status" value="1"/>
</dbReference>
<dbReference type="InterPro" id="IPR005822">
    <property type="entry name" value="Ribosomal_uL13"/>
</dbReference>
<dbReference type="InterPro" id="IPR005823">
    <property type="entry name" value="Ribosomal_uL13_bac-type"/>
</dbReference>
<dbReference type="InterPro" id="IPR023563">
    <property type="entry name" value="Ribosomal_uL13_CS"/>
</dbReference>
<dbReference type="InterPro" id="IPR036899">
    <property type="entry name" value="Ribosomal_uL13_sf"/>
</dbReference>
<dbReference type="NCBIfam" id="TIGR01066">
    <property type="entry name" value="rplM_bact"/>
    <property type="match status" value="1"/>
</dbReference>
<dbReference type="PANTHER" id="PTHR11545:SF2">
    <property type="entry name" value="LARGE RIBOSOMAL SUBUNIT PROTEIN UL13M"/>
    <property type="match status" value="1"/>
</dbReference>
<dbReference type="PANTHER" id="PTHR11545">
    <property type="entry name" value="RIBOSOMAL PROTEIN L13"/>
    <property type="match status" value="1"/>
</dbReference>
<dbReference type="Pfam" id="PF00572">
    <property type="entry name" value="Ribosomal_L13"/>
    <property type="match status" value="1"/>
</dbReference>
<dbReference type="PIRSF" id="PIRSF002181">
    <property type="entry name" value="Ribosomal_L13"/>
    <property type="match status" value="1"/>
</dbReference>
<dbReference type="SUPFAM" id="SSF52161">
    <property type="entry name" value="Ribosomal protein L13"/>
    <property type="match status" value="1"/>
</dbReference>
<dbReference type="PROSITE" id="PS00783">
    <property type="entry name" value="RIBOSOMAL_L13"/>
    <property type="match status" value="1"/>
</dbReference>
<keyword id="KW-1185">Reference proteome</keyword>
<keyword id="KW-0687">Ribonucleoprotein</keyword>
<keyword id="KW-0689">Ribosomal protein</keyword>
<comment type="function">
    <text evidence="1">This protein is one of the early assembly proteins of the 50S ribosomal subunit, although it is not seen to bind rRNA by itself. It is important during the early stages of 50S assembly.</text>
</comment>
<comment type="subunit">
    <text evidence="1">Part of the 50S ribosomal subunit.</text>
</comment>
<comment type="similarity">
    <text evidence="1">Belongs to the universal ribosomal protein uL13 family.</text>
</comment>
<accession>Q890R6</accession>
<feature type="chain" id="PRO_0000261716" description="Large ribosomal subunit protein uL13">
    <location>
        <begin position="1"/>
        <end position="144"/>
    </location>
</feature>
<reference key="1">
    <citation type="journal article" date="2003" name="Proc. Natl. Acad. Sci. U.S.A.">
        <title>The genome sequence of Clostridium tetani, the causative agent of tetanus disease.</title>
        <authorList>
            <person name="Brueggemann H."/>
            <person name="Baeumer S."/>
            <person name="Fricke W.F."/>
            <person name="Wiezer A."/>
            <person name="Liesegang H."/>
            <person name="Decker I."/>
            <person name="Herzberg C."/>
            <person name="Martinez-Arias R."/>
            <person name="Merkl R."/>
            <person name="Henne A."/>
            <person name="Gottschalk G."/>
        </authorList>
    </citation>
    <scope>NUCLEOTIDE SEQUENCE [LARGE SCALE GENOMIC DNA]</scope>
    <source>
        <strain>Massachusetts / E88</strain>
    </source>
</reference>
<name>RL13_CLOTE</name>
<sequence length="144" mass="16511">MKSYIAKPEEVQRKWYVVDAEGKPLGRVASQVALILRGKNKPTYTPHVDTGDYVVIINAEKVVLTGKKLDQKMLRHHSLYPGGLKEVPYKEALAKKPEFVFEEAVRRMLPKGPLGRKMLKKLKVYRGSEHNNEAQNPEVLELRY</sequence>
<proteinExistence type="inferred from homology"/>
<protein>
    <recommendedName>
        <fullName evidence="1">Large ribosomal subunit protein uL13</fullName>
    </recommendedName>
    <alternativeName>
        <fullName evidence="2">50S ribosomal protein L13</fullName>
    </alternativeName>
</protein>